<proteinExistence type="evidence at protein level"/>
<accession>P03296</accession>
<accession>Q76ZJ9</accession>
<organism>
    <name type="scientific">Vaccinia virus (strain Western Reserve)</name>
    <name type="common">VACV</name>
    <name type="synonym">Vaccinia virus (strain WR)</name>
    <dbReference type="NCBI Taxonomy" id="10254"/>
    <lineage>
        <taxon>Viruses</taxon>
        <taxon>Varidnaviria</taxon>
        <taxon>Bamfordvirae</taxon>
        <taxon>Nucleocytoviricota</taxon>
        <taxon>Pokkesviricetes</taxon>
        <taxon>Chitovirales</taxon>
        <taxon>Poxviridae</taxon>
        <taxon>Chordopoxvirinae</taxon>
        <taxon>Orthopoxvirus</taxon>
        <taxon>Vaccinia virus</taxon>
    </lineage>
</organism>
<keyword id="KW-0002">3D-structure</keyword>
<keyword id="KW-1185">Reference proteome</keyword>
<gene>
    <name type="ordered locus">VACWR010</name>
    <name type="ORF">C10L</name>
</gene>
<gene>
    <name type="ordered locus">VACWR209</name>
</gene>
<sequence length="331" mass="38505">MDIYDDKGLQTIKLFNNEFDCIRNDIRELFKHVTDSDSIQLPMEDNSDIIENIRKILYRRLKNVECVDIDSTITFMKYDPNDDNKRTCSNWVPLTNNYMEYCLVIYLETPICGGKIKLYHPTGNIKSDKDIMFAKTLDFKSKKVLTGRKTIAVLDISVSYNRSMTTIHYNDDVDIDIHTDKNGKELCYCYITIDDHYLVDVETIGVIVNRSGKCLLVNNHLGIGIVKDKRISDSFGDVCMDTIFDFSEARELFSLTNDDNRNIAWDTDKLDDDTDIWTPVTEDDYKFLSRLVLYAKSQSDTVFDYYVLTGDTEPPTVFIFKVTRFYFNMPK</sequence>
<name>C10_VACCW</name>
<organismHost>
    <name type="scientific">Bos taurus</name>
    <name type="common">Bovine</name>
    <dbReference type="NCBI Taxonomy" id="9913"/>
</organismHost>
<protein>
    <recommendedName>
        <fullName>Protein C10</fullName>
    </recommendedName>
</protein>
<feature type="chain" id="PRO_0000099410" description="Protein C10">
    <location>
        <begin position="1"/>
        <end position="331"/>
    </location>
</feature>
<feature type="strand" evidence="2">
    <location>
        <begin position="2"/>
        <end position="4"/>
    </location>
</feature>
<feature type="strand" evidence="2">
    <location>
        <begin position="6"/>
        <end position="8"/>
    </location>
</feature>
<feature type="strand" evidence="2">
    <location>
        <begin position="10"/>
        <end position="14"/>
    </location>
</feature>
<feature type="strand" evidence="2">
    <location>
        <begin position="16"/>
        <end position="20"/>
    </location>
</feature>
<feature type="helix" evidence="2">
    <location>
        <begin position="21"/>
        <end position="30"/>
    </location>
</feature>
<feature type="strand" evidence="2">
    <location>
        <begin position="37"/>
        <end position="42"/>
    </location>
</feature>
<feature type="strand" evidence="2">
    <location>
        <begin position="44"/>
        <end position="46"/>
    </location>
</feature>
<feature type="helix" evidence="2">
    <location>
        <begin position="48"/>
        <end position="59"/>
    </location>
</feature>
<feature type="strand" evidence="2">
    <location>
        <begin position="61"/>
        <end position="69"/>
    </location>
</feature>
<feature type="strand" evidence="2">
    <location>
        <begin position="71"/>
        <end position="78"/>
    </location>
</feature>
<feature type="strand" evidence="2">
    <location>
        <begin position="94"/>
        <end position="108"/>
    </location>
</feature>
<feature type="strand" evidence="2">
    <location>
        <begin position="111"/>
        <end position="113"/>
    </location>
</feature>
<feature type="strand" evidence="2">
    <location>
        <begin position="116"/>
        <end position="119"/>
    </location>
</feature>
<feature type="strand" evidence="2">
    <location>
        <begin position="124"/>
        <end position="127"/>
    </location>
</feature>
<feature type="strand" evidence="2">
    <location>
        <begin position="131"/>
        <end position="141"/>
    </location>
</feature>
<feature type="strand" evidence="2">
    <location>
        <begin position="144"/>
        <end position="147"/>
    </location>
</feature>
<feature type="strand" evidence="2">
    <location>
        <begin position="149"/>
        <end position="160"/>
    </location>
</feature>
<feature type="strand" evidence="3">
    <location>
        <begin position="165"/>
        <end position="168"/>
    </location>
</feature>
<feature type="strand" evidence="3">
    <location>
        <begin position="170"/>
        <end position="172"/>
    </location>
</feature>
<feature type="strand" evidence="3">
    <location>
        <begin position="174"/>
        <end position="180"/>
    </location>
</feature>
<feature type="strand" evidence="3">
    <location>
        <begin position="186"/>
        <end position="193"/>
    </location>
</feature>
<feature type="strand" evidence="3">
    <location>
        <begin position="203"/>
        <end position="208"/>
    </location>
</feature>
<feature type="strand" evidence="3">
    <location>
        <begin position="214"/>
        <end position="219"/>
    </location>
</feature>
<feature type="helix" evidence="3">
    <location>
        <begin position="226"/>
        <end position="228"/>
    </location>
</feature>
<feature type="strand" evidence="3">
    <location>
        <begin position="231"/>
        <end position="234"/>
    </location>
</feature>
<feature type="helix" evidence="3">
    <location>
        <begin position="235"/>
        <end position="242"/>
    </location>
</feature>
<feature type="helix" evidence="3">
    <location>
        <begin position="247"/>
        <end position="250"/>
    </location>
</feature>
<feature type="turn" evidence="3">
    <location>
        <begin position="263"/>
        <end position="265"/>
    </location>
</feature>
<feature type="helix" evidence="3">
    <location>
        <begin position="283"/>
        <end position="297"/>
    </location>
</feature>
<feature type="turn" evidence="3">
    <location>
        <begin position="298"/>
        <end position="301"/>
    </location>
</feature>
<feature type="strand" evidence="3">
    <location>
        <begin position="304"/>
        <end position="310"/>
    </location>
</feature>
<feature type="strand" evidence="3">
    <location>
        <begin position="316"/>
        <end position="327"/>
    </location>
</feature>
<evidence type="ECO:0000305" key="1"/>
<evidence type="ECO:0007829" key="2">
    <source>
        <dbReference type="PDB" id="8AG3"/>
    </source>
</evidence>
<evidence type="ECO:0007829" key="3">
    <source>
        <dbReference type="PDB" id="8AG4"/>
    </source>
</evidence>
<comment type="similarity">
    <text evidence="1">Belongs to the poxviridae C4/C10 protein family.</text>
</comment>
<reference key="1">
    <citation type="journal article" date="1982" name="J. Virol.">
        <title>Complete nucleotide sequences of two adjacent early vaccinia virus genes located within the inverted terminal repetition.</title>
        <authorList>
            <person name="Venkatesan S."/>
            <person name="Gershowitz A."/>
            <person name="Moss B."/>
        </authorList>
    </citation>
    <scope>NUCLEOTIDE SEQUENCE [GENOMIC DNA]</scope>
</reference>
<reference key="2">
    <citation type="submission" date="2003-02" db="EMBL/GenBank/DDBJ databases">
        <title>Sequencing of the coding region of Vaccinia-WR to an average 9-fold redundancy and an error rate of 0.16/10kb.</title>
        <authorList>
            <person name="Esposito J.J."/>
            <person name="Frace A.M."/>
            <person name="Sammons S.A."/>
            <person name="Olsen-Rasmussen M."/>
            <person name="Osborne J."/>
            <person name="Wohlhueter R."/>
        </authorList>
    </citation>
    <scope>NUCLEOTIDE SEQUENCE [LARGE SCALE GENOMIC DNA]</scope>
</reference>
<dbReference type="EMBL" id="J02421">
    <property type="status" value="NOT_ANNOTATED_CDS"/>
    <property type="molecule type" value="Genomic_DNA"/>
</dbReference>
<dbReference type="EMBL" id="AY243312">
    <property type="protein sequence ID" value="AAO89289.1"/>
    <property type="molecule type" value="Genomic_DNA"/>
</dbReference>
<dbReference type="EMBL" id="AY243312">
    <property type="protein sequence ID" value="AAO89488.1"/>
    <property type="molecule type" value="Genomic_DNA"/>
</dbReference>
<dbReference type="PIR" id="A03870">
    <property type="entry name" value="WMVZ4"/>
</dbReference>
<dbReference type="RefSeq" id="YP_232892.1">
    <property type="nucleotide sequence ID" value="NC_006998.1"/>
</dbReference>
<dbReference type="RefSeq" id="YP_233091.1">
    <property type="nucleotide sequence ID" value="NC_006998.1"/>
</dbReference>
<dbReference type="PDB" id="8AG3">
    <property type="method" value="EM"/>
    <property type="resolution" value="3.47 A"/>
    <property type="chains" value="C/D=1-331"/>
</dbReference>
<dbReference type="PDB" id="8AG4">
    <property type="method" value="EM"/>
    <property type="resolution" value="2.46 A"/>
    <property type="chains" value="C/D=1-331"/>
</dbReference>
<dbReference type="PDB" id="8AG5">
    <property type="method" value="EM"/>
    <property type="resolution" value="3.47 A"/>
    <property type="chains" value="C/D=1-331"/>
</dbReference>
<dbReference type="PDBsum" id="8AG3"/>
<dbReference type="PDBsum" id="8AG4"/>
<dbReference type="PDBsum" id="8AG5"/>
<dbReference type="EMDB" id="EMD-15414"/>
<dbReference type="EMDB" id="EMD-15415"/>
<dbReference type="EMDB" id="EMD-15416"/>
<dbReference type="SMR" id="P03296"/>
<dbReference type="IntAct" id="P03296">
    <property type="interactions" value="1"/>
</dbReference>
<dbReference type="MINT" id="P03296"/>
<dbReference type="DNASU" id="3707586"/>
<dbReference type="DNASU" id="3707625"/>
<dbReference type="GeneID" id="3707586"/>
<dbReference type="GeneID" id="3707625"/>
<dbReference type="KEGG" id="vg:3707586"/>
<dbReference type="KEGG" id="vg:3707625"/>
<dbReference type="Proteomes" id="UP000000344">
    <property type="component" value="Genome"/>
</dbReference>
<dbReference type="InterPro" id="IPR005004">
    <property type="entry name" value="Poxvirus_C4/C10"/>
</dbReference>
<dbReference type="Pfam" id="PF03336">
    <property type="entry name" value="Pox_C4_C10"/>
    <property type="match status" value="1"/>
</dbReference>
<dbReference type="PIRSF" id="PIRSF003698">
    <property type="entry name" value="VAC_C10L"/>
    <property type="match status" value="1"/>
</dbReference>